<gene>
    <name evidence="1" type="primary">pheS</name>
    <name type="ordered locus">Swol_1094</name>
</gene>
<keyword id="KW-0030">Aminoacyl-tRNA synthetase</keyword>
<keyword id="KW-0067">ATP-binding</keyword>
<keyword id="KW-0963">Cytoplasm</keyword>
<keyword id="KW-0436">Ligase</keyword>
<keyword id="KW-0460">Magnesium</keyword>
<keyword id="KW-0479">Metal-binding</keyword>
<keyword id="KW-0547">Nucleotide-binding</keyword>
<keyword id="KW-0648">Protein biosynthesis</keyword>
<keyword id="KW-1185">Reference proteome</keyword>
<comment type="catalytic activity">
    <reaction evidence="1">
        <text>tRNA(Phe) + L-phenylalanine + ATP = L-phenylalanyl-tRNA(Phe) + AMP + diphosphate + H(+)</text>
        <dbReference type="Rhea" id="RHEA:19413"/>
        <dbReference type="Rhea" id="RHEA-COMP:9668"/>
        <dbReference type="Rhea" id="RHEA-COMP:9699"/>
        <dbReference type="ChEBI" id="CHEBI:15378"/>
        <dbReference type="ChEBI" id="CHEBI:30616"/>
        <dbReference type="ChEBI" id="CHEBI:33019"/>
        <dbReference type="ChEBI" id="CHEBI:58095"/>
        <dbReference type="ChEBI" id="CHEBI:78442"/>
        <dbReference type="ChEBI" id="CHEBI:78531"/>
        <dbReference type="ChEBI" id="CHEBI:456215"/>
        <dbReference type="EC" id="6.1.1.20"/>
    </reaction>
</comment>
<comment type="cofactor">
    <cofactor evidence="1">
        <name>Mg(2+)</name>
        <dbReference type="ChEBI" id="CHEBI:18420"/>
    </cofactor>
    <text evidence="1">Binds 2 magnesium ions per tetramer.</text>
</comment>
<comment type="subunit">
    <text evidence="1">Tetramer of two alpha and two beta subunits.</text>
</comment>
<comment type="subcellular location">
    <subcellularLocation>
        <location evidence="1">Cytoplasm</location>
    </subcellularLocation>
</comment>
<comment type="similarity">
    <text evidence="1">Belongs to the class-II aminoacyl-tRNA synthetase family. Phe-tRNA synthetase alpha subunit type 1 subfamily.</text>
</comment>
<protein>
    <recommendedName>
        <fullName evidence="1">Phenylalanine--tRNA ligase alpha subunit</fullName>
        <ecNumber evidence="1">6.1.1.20</ecNumber>
    </recommendedName>
    <alternativeName>
        <fullName evidence="1">Phenylalanyl-tRNA synthetase alpha subunit</fullName>
        <shortName evidence="1">PheRS</shortName>
    </alternativeName>
</protein>
<sequence>MLRKIEEIKNECQARLSQVSSMEELNEFRIKTLGRKGEVTLLLRGLKDLSGEEKARAGRVANELKQNLEQMLREKIDAFKLDELEQKLLQEKIDVTLPGLPRQRGRQHPLTQITREIQDIFIGMGFTVAEGPEIELDYYNFEALNVPRDHPARDMQDSFYISEELLLRTHTSPVQVRTMEKMAPQIPIKIIVPGKVYRKDDDATHSPMFHQVEGLVIGQRITFAHLKGTLVRFAHQVFGEDVTVRYRPSFFPFTEPSAEMDISCVMCQGEGCRVCSHTGWLEILGAGMVNPRVLQYGGYDPEEVTGFAFGMGIERIAMLKYGINDLRLFFENDKRFLAQF</sequence>
<accession>Q0AY00</accession>
<feature type="chain" id="PRO_1000006912" description="Phenylalanine--tRNA ligase alpha subunit">
    <location>
        <begin position="1"/>
        <end position="340"/>
    </location>
</feature>
<feature type="binding site" evidence="1">
    <location>
        <position position="255"/>
    </location>
    <ligand>
        <name>Mg(2+)</name>
        <dbReference type="ChEBI" id="CHEBI:18420"/>
        <note>shared with beta subunit</note>
    </ligand>
</feature>
<dbReference type="EC" id="6.1.1.20" evidence="1"/>
<dbReference type="EMBL" id="CP000448">
    <property type="protein sequence ID" value="ABI68404.1"/>
    <property type="molecule type" value="Genomic_DNA"/>
</dbReference>
<dbReference type="RefSeq" id="WP_011640508.1">
    <property type="nucleotide sequence ID" value="NC_008346.1"/>
</dbReference>
<dbReference type="SMR" id="Q0AY00"/>
<dbReference type="STRING" id="335541.Swol_1094"/>
<dbReference type="KEGG" id="swo:Swol_1094"/>
<dbReference type="eggNOG" id="COG0016">
    <property type="taxonomic scope" value="Bacteria"/>
</dbReference>
<dbReference type="HOGENOM" id="CLU_025086_0_1_9"/>
<dbReference type="OrthoDB" id="9800719at2"/>
<dbReference type="Proteomes" id="UP000001968">
    <property type="component" value="Chromosome"/>
</dbReference>
<dbReference type="GO" id="GO:0005737">
    <property type="term" value="C:cytoplasm"/>
    <property type="evidence" value="ECO:0007669"/>
    <property type="project" value="UniProtKB-SubCell"/>
</dbReference>
<dbReference type="GO" id="GO:0005524">
    <property type="term" value="F:ATP binding"/>
    <property type="evidence" value="ECO:0007669"/>
    <property type="project" value="UniProtKB-UniRule"/>
</dbReference>
<dbReference type="GO" id="GO:0140096">
    <property type="term" value="F:catalytic activity, acting on a protein"/>
    <property type="evidence" value="ECO:0007669"/>
    <property type="project" value="UniProtKB-ARBA"/>
</dbReference>
<dbReference type="GO" id="GO:0000287">
    <property type="term" value="F:magnesium ion binding"/>
    <property type="evidence" value="ECO:0007669"/>
    <property type="project" value="UniProtKB-UniRule"/>
</dbReference>
<dbReference type="GO" id="GO:0004826">
    <property type="term" value="F:phenylalanine-tRNA ligase activity"/>
    <property type="evidence" value="ECO:0007669"/>
    <property type="project" value="UniProtKB-UniRule"/>
</dbReference>
<dbReference type="GO" id="GO:0016740">
    <property type="term" value="F:transferase activity"/>
    <property type="evidence" value="ECO:0007669"/>
    <property type="project" value="UniProtKB-ARBA"/>
</dbReference>
<dbReference type="GO" id="GO:0000049">
    <property type="term" value="F:tRNA binding"/>
    <property type="evidence" value="ECO:0007669"/>
    <property type="project" value="InterPro"/>
</dbReference>
<dbReference type="GO" id="GO:0006432">
    <property type="term" value="P:phenylalanyl-tRNA aminoacylation"/>
    <property type="evidence" value="ECO:0007669"/>
    <property type="project" value="UniProtKB-UniRule"/>
</dbReference>
<dbReference type="CDD" id="cd00496">
    <property type="entry name" value="PheRS_alpha_core"/>
    <property type="match status" value="1"/>
</dbReference>
<dbReference type="FunFam" id="3.30.930.10:FF:000003">
    <property type="entry name" value="Phenylalanine--tRNA ligase alpha subunit"/>
    <property type="match status" value="1"/>
</dbReference>
<dbReference type="Gene3D" id="3.30.930.10">
    <property type="entry name" value="Bira Bifunctional Protein, Domain 2"/>
    <property type="match status" value="1"/>
</dbReference>
<dbReference type="HAMAP" id="MF_00281">
    <property type="entry name" value="Phe_tRNA_synth_alpha1"/>
    <property type="match status" value="1"/>
</dbReference>
<dbReference type="InterPro" id="IPR006195">
    <property type="entry name" value="aa-tRNA-synth_II"/>
</dbReference>
<dbReference type="InterPro" id="IPR045864">
    <property type="entry name" value="aa-tRNA-synth_II/BPL/LPL"/>
</dbReference>
<dbReference type="InterPro" id="IPR004529">
    <property type="entry name" value="Phe-tRNA-synth_IIc_asu"/>
</dbReference>
<dbReference type="InterPro" id="IPR004188">
    <property type="entry name" value="Phe-tRNA_ligase_II_N"/>
</dbReference>
<dbReference type="InterPro" id="IPR022911">
    <property type="entry name" value="Phe_tRNA_ligase_alpha1_bac"/>
</dbReference>
<dbReference type="InterPro" id="IPR002319">
    <property type="entry name" value="Phenylalanyl-tRNA_Synthase"/>
</dbReference>
<dbReference type="InterPro" id="IPR010978">
    <property type="entry name" value="tRNA-bd_arm"/>
</dbReference>
<dbReference type="NCBIfam" id="TIGR00468">
    <property type="entry name" value="pheS"/>
    <property type="match status" value="1"/>
</dbReference>
<dbReference type="PANTHER" id="PTHR11538:SF41">
    <property type="entry name" value="PHENYLALANINE--TRNA LIGASE, MITOCHONDRIAL"/>
    <property type="match status" value="1"/>
</dbReference>
<dbReference type="PANTHER" id="PTHR11538">
    <property type="entry name" value="PHENYLALANYL-TRNA SYNTHETASE"/>
    <property type="match status" value="1"/>
</dbReference>
<dbReference type="Pfam" id="PF02912">
    <property type="entry name" value="Phe_tRNA-synt_N"/>
    <property type="match status" value="1"/>
</dbReference>
<dbReference type="Pfam" id="PF01409">
    <property type="entry name" value="tRNA-synt_2d"/>
    <property type="match status" value="1"/>
</dbReference>
<dbReference type="SUPFAM" id="SSF55681">
    <property type="entry name" value="Class II aaRS and biotin synthetases"/>
    <property type="match status" value="1"/>
</dbReference>
<dbReference type="SUPFAM" id="SSF46589">
    <property type="entry name" value="tRNA-binding arm"/>
    <property type="match status" value="1"/>
</dbReference>
<dbReference type="PROSITE" id="PS50862">
    <property type="entry name" value="AA_TRNA_LIGASE_II"/>
    <property type="match status" value="1"/>
</dbReference>
<proteinExistence type="inferred from homology"/>
<evidence type="ECO:0000255" key="1">
    <source>
        <dbReference type="HAMAP-Rule" id="MF_00281"/>
    </source>
</evidence>
<name>SYFA_SYNWW</name>
<reference key="1">
    <citation type="journal article" date="2010" name="Environ. Microbiol.">
        <title>The genome of Syntrophomonas wolfei: new insights into syntrophic metabolism and biohydrogen production.</title>
        <authorList>
            <person name="Sieber J.R."/>
            <person name="Sims D.R."/>
            <person name="Han C."/>
            <person name="Kim E."/>
            <person name="Lykidis A."/>
            <person name="Lapidus A.L."/>
            <person name="McDonnald E."/>
            <person name="Rohlin L."/>
            <person name="Culley D.E."/>
            <person name="Gunsalus R."/>
            <person name="McInerney M.J."/>
        </authorList>
    </citation>
    <scope>NUCLEOTIDE SEQUENCE [LARGE SCALE GENOMIC DNA]</scope>
    <source>
        <strain>DSM 2245B / Goettingen</strain>
    </source>
</reference>
<organism>
    <name type="scientific">Syntrophomonas wolfei subsp. wolfei (strain DSM 2245B / Goettingen)</name>
    <dbReference type="NCBI Taxonomy" id="335541"/>
    <lineage>
        <taxon>Bacteria</taxon>
        <taxon>Bacillati</taxon>
        <taxon>Bacillota</taxon>
        <taxon>Clostridia</taxon>
        <taxon>Eubacteriales</taxon>
        <taxon>Syntrophomonadaceae</taxon>
        <taxon>Syntrophomonas</taxon>
    </lineage>
</organism>